<accession>Q8FFE0</accession>
<name>YPDB_ECOL6</name>
<evidence type="ECO:0000250" key="1"/>
<evidence type="ECO:0000250" key="2">
    <source>
        <dbReference type="UniProtKB" id="P0AE39"/>
    </source>
</evidence>
<evidence type="ECO:0000255" key="3">
    <source>
        <dbReference type="PROSITE-ProRule" id="PRU00112"/>
    </source>
</evidence>
<evidence type="ECO:0000255" key="4">
    <source>
        <dbReference type="PROSITE-ProRule" id="PRU00169"/>
    </source>
</evidence>
<evidence type="ECO:0000305" key="5"/>
<protein>
    <recommendedName>
        <fullName evidence="2">Transcriptional regulatory protein YpdB</fullName>
    </recommendedName>
</protein>
<proteinExistence type="inferred from homology"/>
<gene>
    <name type="primary">ypdB</name>
    <name type="ordered locus">c2920</name>
</gene>
<comment type="function">
    <text evidence="2">Member of the two-component regulatory system YpdA/YpdB. YpdB regulates expression of yhjX by binding to its promoter region.</text>
</comment>
<comment type="subcellular location">
    <subcellularLocation>
        <location evidence="1">Cytoplasm</location>
    </subcellularLocation>
</comment>
<comment type="PTM">
    <text evidence="1">Phosphorylated by YpdA.</text>
</comment>
<comment type="sequence caution" evidence="5">
    <conflict type="erroneous initiation">
        <sequence resource="EMBL-CDS" id="AAN81370"/>
    </conflict>
    <text>Extended N-terminus.</text>
</comment>
<dbReference type="EMBL" id="AE014075">
    <property type="protein sequence ID" value="AAN81370.1"/>
    <property type="status" value="ALT_INIT"/>
    <property type="molecule type" value="Genomic_DNA"/>
</dbReference>
<dbReference type="RefSeq" id="WP_001350316.1">
    <property type="nucleotide sequence ID" value="NZ_CP051263.1"/>
</dbReference>
<dbReference type="SMR" id="Q8FFE0"/>
<dbReference type="STRING" id="199310.c2920"/>
<dbReference type="KEGG" id="ecc:c2920"/>
<dbReference type="eggNOG" id="COG3279">
    <property type="taxonomic scope" value="Bacteria"/>
</dbReference>
<dbReference type="HOGENOM" id="CLU_000445_14_1_6"/>
<dbReference type="Proteomes" id="UP000001410">
    <property type="component" value="Chromosome"/>
</dbReference>
<dbReference type="GO" id="GO:0005737">
    <property type="term" value="C:cytoplasm"/>
    <property type="evidence" value="ECO:0007669"/>
    <property type="project" value="UniProtKB-SubCell"/>
</dbReference>
<dbReference type="GO" id="GO:0003677">
    <property type="term" value="F:DNA binding"/>
    <property type="evidence" value="ECO:0007669"/>
    <property type="project" value="UniProtKB-KW"/>
</dbReference>
<dbReference type="GO" id="GO:0000156">
    <property type="term" value="F:phosphorelay response regulator activity"/>
    <property type="evidence" value="ECO:0007669"/>
    <property type="project" value="InterPro"/>
</dbReference>
<dbReference type="CDD" id="cd17532">
    <property type="entry name" value="REC_LytTR_AlgR-like"/>
    <property type="match status" value="1"/>
</dbReference>
<dbReference type="FunFam" id="2.20.25.10:FF:000010">
    <property type="entry name" value="Two-component system response regulator"/>
    <property type="match status" value="1"/>
</dbReference>
<dbReference type="FunFam" id="3.40.50.2300:FF:000104">
    <property type="entry name" value="Two-component system response regulator"/>
    <property type="match status" value="1"/>
</dbReference>
<dbReference type="Gene3D" id="2.20.25.10">
    <property type="match status" value="1"/>
</dbReference>
<dbReference type="Gene3D" id="2.40.50.40">
    <property type="match status" value="1"/>
</dbReference>
<dbReference type="Gene3D" id="3.40.50.2300">
    <property type="match status" value="1"/>
</dbReference>
<dbReference type="InterPro" id="IPR011006">
    <property type="entry name" value="CheY-like_superfamily"/>
</dbReference>
<dbReference type="InterPro" id="IPR046947">
    <property type="entry name" value="LytR-like"/>
</dbReference>
<dbReference type="InterPro" id="IPR007492">
    <property type="entry name" value="LytTR_DNA-bd_dom"/>
</dbReference>
<dbReference type="InterPro" id="IPR001789">
    <property type="entry name" value="Sig_transdc_resp-reg_receiver"/>
</dbReference>
<dbReference type="PANTHER" id="PTHR37299:SF1">
    <property type="entry name" value="STAGE 0 SPORULATION PROTEIN A HOMOLOG"/>
    <property type="match status" value="1"/>
</dbReference>
<dbReference type="PANTHER" id="PTHR37299">
    <property type="entry name" value="TRANSCRIPTIONAL REGULATOR-RELATED"/>
    <property type="match status" value="1"/>
</dbReference>
<dbReference type="Pfam" id="PF04397">
    <property type="entry name" value="LytTR"/>
    <property type="match status" value="1"/>
</dbReference>
<dbReference type="Pfam" id="PF00072">
    <property type="entry name" value="Response_reg"/>
    <property type="match status" value="1"/>
</dbReference>
<dbReference type="SMART" id="SM00850">
    <property type="entry name" value="LytTR"/>
    <property type="match status" value="1"/>
</dbReference>
<dbReference type="SMART" id="SM00448">
    <property type="entry name" value="REC"/>
    <property type="match status" value="1"/>
</dbReference>
<dbReference type="SUPFAM" id="SSF52172">
    <property type="entry name" value="CheY-like"/>
    <property type="match status" value="1"/>
</dbReference>
<dbReference type="PROSITE" id="PS50930">
    <property type="entry name" value="HTH_LYTTR"/>
    <property type="match status" value="1"/>
</dbReference>
<dbReference type="PROSITE" id="PS50110">
    <property type="entry name" value="RESPONSE_REGULATORY"/>
    <property type="match status" value="1"/>
</dbReference>
<sequence length="245" mass="28866">MKVIIVEDEFLAQQELSWLIKEHSQMEIVGTFDDGLDVLKFLQHNRVDAIFLDINIPSLDGVLLAQNISQFAHKPFIVFITAWKEHAVEAFELEAFDYILKPYQESRITGMLQKLEAAWQQQQTSSTTPAATVTRENDTINLVKDERIIVTPINDIYYAEAHEKMTFVYTRRESYVMPMNITEFFSKLPPSHFFRCHRSFCVNLNKIREIEPWFNNTYILRLKDLDFEVPVSRSKVKEFRQLMHL</sequence>
<organism>
    <name type="scientific">Escherichia coli O6:H1 (strain CFT073 / ATCC 700928 / UPEC)</name>
    <dbReference type="NCBI Taxonomy" id="199310"/>
    <lineage>
        <taxon>Bacteria</taxon>
        <taxon>Pseudomonadati</taxon>
        <taxon>Pseudomonadota</taxon>
        <taxon>Gammaproteobacteria</taxon>
        <taxon>Enterobacterales</taxon>
        <taxon>Enterobacteriaceae</taxon>
        <taxon>Escherichia</taxon>
    </lineage>
</organism>
<keyword id="KW-0963">Cytoplasm</keyword>
<keyword id="KW-0238">DNA-binding</keyword>
<keyword id="KW-0597">Phosphoprotein</keyword>
<keyword id="KW-1185">Reference proteome</keyword>
<keyword id="KW-0804">Transcription</keyword>
<keyword id="KW-0805">Transcription regulation</keyword>
<keyword id="KW-0902">Two-component regulatory system</keyword>
<reference key="1">
    <citation type="journal article" date="2002" name="Proc. Natl. Acad. Sci. U.S.A.">
        <title>Extensive mosaic structure revealed by the complete genome sequence of uropathogenic Escherichia coli.</title>
        <authorList>
            <person name="Welch R.A."/>
            <person name="Burland V."/>
            <person name="Plunkett G. III"/>
            <person name="Redford P."/>
            <person name="Roesch P."/>
            <person name="Rasko D."/>
            <person name="Buckles E.L."/>
            <person name="Liou S.-R."/>
            <person name="Boutin A."/>
            <person name="Hackett J."/>
            <person name="Stroud D."/>
            <person name="Mayhew G.F."/>
            <person name="Rose D.J."/>
            <person name="Zhou S."/>
            <person name="Schwartz D.C."/>
            <person name="Perna N.T."/>
            <person name="Mobley H.L.T."/>
            <person name="Donnenberg M.S."/>
            <person name="Blattner F.R."/>
        </authorList>
    </citation>
    <scope>NUCLEOTIDE SEQUENCE [LARGE SCALE GENOMIC DNA]</scope>
    <source>
        <strain>CFT073 / ATCC 700928 / UPEC</strain>
    </source>
</reference>
<feature type="chain" id="PRO_0000081384" description="Transcriptional regulatory protein YpdB">
    <location>
        <begin position="1"/>
        <end position="245"/>
    </location>
</feature>
<feature type="domain" description="Response regulatory" evidence="4">
    <location>
        <begin position="2"/>
        <end position="116"/>
    </location>
</feature>
<feature type="domain" description="HTH LytTR-type" evidence="3">
    <location>
        <begin position="140"/>
        <end position="245"/>
    </location>
</feature>
<feature type="modified residue" description="4-aspartylphosphate" evidence="4">
    <location>
        <position position="53"/>
    </location>
</feature>